<protein>
    <recommendedName>
        <fullName>UPF0758 protein Bpro_0948</fullName>
    </recommendedName>
</protein>
<evidence type="ECO:0000255" key="1">
    <source>
        <dbReference type="PROSITE-ProRule" id="PRU01182"/>
    </source>
</evidence>
<evidence type="ECO:0000305" key="2"/>
<organism>
    <name type="scientific">Polaromonas sp. (strain JS666 / ATCC BAA-500)</name>
    <dbReference type="NCBI Taxonomy" id="296591"/>
    <lineage>
        <taxon>Bacteria</taxon>
        <taxon>Pseudomonadati</taxon>
        <taxon>Pseudomonadota</taxon>
        <taxon>Betaproteobacteria</taxon>
        <taxon>Burkholderiales</taxon>
        <taxon>Comamonadaceae</taxon>
        <taxon>Polaromonas</taxon>
    </lineage>
</organism>
<comment type="similarity">
    <text evidence="2">Belongs to the UPF0758 family.</text>
</comment>
<comment type="sequence caution" evidence="2">
    <conflict type="erroneous initiation">
        <sequence resource="EMBL-CDS" id="ABE42904"/>
    </conflict>
</comment>
<proteinExistence type="inferred from homology"/>
<gene>
    <name type="ordered locus">Bpro_0948</name>
</gene>
<name>Y948_POLSJ</name>
<dbReference type="EMBL" id="CP000316">
    <property type="protein sequence ID" value="ABE42904.1"/>
    <property type="status" value="ALT_INIT"/>
    <property type="molecule type" value="Genomic_DNA"/>
</dbReference>
<dbReference type="RefSeq" id="WP_041388363.1">
    <property type="nucleotide sequence ID" value="NC_007948.1"/>
</dbReference>
<dbReference type="SMR" id="Q12EY8"/>
<dbReference type="STRING" id="296591.Bpro_0948"/>
<dbReference type="KEGG" id="pol:Bpro_0948"/>
<dbReference type="eggNOG" id="COG2003">
    <property type="taxonomic scope" value="Bacteria"/>
</dbReference>
<dbReference type="HOGENOM" id="CLU_073529_0_1_4"/>
<dbReference type="OrthoDB" id="9804482at2"/>
<dbReference type="Proteomes" id="UP000001983">
    <property type="component" value="Chromosome"/>
</dbReference>
<dbReference type="GO" id="GO:0046872">
    <property type="term" value="F:metal ion binding"/>
    <property type="evidence" value="ECO:0007669"/>
    <property type="project" value="UniProtKB-KW"/>
</dbReference>
<dbReference type="GO" id="GO:0008237">
    <property type="term" value="F:metallopeptidase activity"/>
    <property type="evidence" value="ECO:0007669"/>
    <property type="project" value="UniProtKB-KW"/>
</dbReference>
<dbReference type="GO" id="GO:0006508">
    <property type="term" value="P:proteolysis"/>
    <property type="evidence" value="ECO:0007669"/>
    <property type="project" value="UniProtKB-KW"/>
</dbReference>
<dbReference type="CDD" id="cd08071">
    <property type="entry name" value="MPN_DUF2466"/>
    <property type="match status" value="1"/>
</dbReference>
<dbReference type="Gene3D" id="3.40.140.10">
    <property type="entry name" value="Cytidine Deaminase, domain 2"/>
    <property type="match status" value="1"/>
</dbReference>
<dbReference type="InterPro" id="IPR037518">
    <property type="entry name" value="MPN"/>
</dbReference>
<dbReference type="InterPro" id="IPR025657">
    <property type="entry name" value="RadC_JAB"/>
</dbReference>
<dbReference type="InterPro" id="IPR010994">
    <property type="entry name" value="RuvA_2-like"/>
</dbReference>
<dbReference type="InterPro" id="IPR001405">
    <property type="entry name" value="UPF0758"/>
</dbReference>
<dbReference type="InterPro" id="IPR020891">
    <property type="entry name" value="UPF0758_CS"/>
</dbReference>
<dbReference type="InterPro" id="IPR046778">
    <property type="entry name" value="UPF0758_N"/>
</dbReference>
<dbReference type="NCBIfam" id="NF000642">
    <property type="entry name" value="PRK00024.1"/>
    <property type="match status" value="1"/>
</dbReference>
<dbReference type="NCBIfam" id="TIGR00608">
    <property type="entry name" value="radc"/>
    <property type="match status" value="1"/>
</dbReference>
<dbReference type="PANTHER" id="PTHR30471">
    <property type="entry name" value="DNA REPAIR PROTEIN RADC"/>
    <property type="match status" value="1"/>
</dbReference>
<dbReference type="PANTHER" id="PTHR30471:SF3">
    <property type="entry name" value="UPF0758 PROTEIN YEES-RELATED"/>
    <property type="match status" value="1"/>
</dbReference>
<dbReference type="Pfam" id="PF04002">
    <property type="entry name" value="RadC"/>
    <property type="match status" value="1"/>
</dbReference>
<dbReference type="Pfam" id="PF20582">
    <property type="entry name" value="UPF0758_N"/>
    <property type="match status" value="1"/>
</dbReference>
<dbReference type="SUPFAM" id="SSF102712">
    <property type="entry name" value="JAB1/MPN domain"/>
    <property type="match status" value="1"/>
</dbReference>
<dbReference type="SUPFAM" id="SSF47781">
    <property type="entry name" value="RuvA domain 2-like"/>
    <property type="match status" value="1"/>
</dbReference>
<dbReference type="PROSITE" id="PS50249">
    <property type="entry name" value="MPN"/>
    <property type="match status" value="1"/>
</dbReference>
<dbReference type="PROSITE" id="PS01302">
    <property type="entry name" value="UPF0758"/>
    <property type="match status" value="1"/>
</dbReference>
<sequence length="224" mass="24010">MLLKDLPEDARPREKLLARGPAALSDAELLALLLRTGLPGKNALQMGQELVDTFGGVAGLLHTGPEALKSIKGLGPAKRAELVAVLELARRALAEELKEKALFSTPQAVRDYLQLQLGGRPHEIFAVLFLDSQHRLIALEELFRGTLTQTSVYPREVVVRALALNAASVVLAHNHPSGAATPSRADEALTQTLKSALALVDVRVLDHFVVTSTQAVSMAELGLL</sequence>
<reference key="1">
    <citation type="journal article" date="2008" name="Appl. Environ. Microbiol.">
        <title>The genome of Polaromonas sp. strain JS666: insights into the evolution of a hydrocarbon- and xenobiotic-degrading bacterium, and features of relevance to biotechnology.</title>
        <authorList>
            <person name="Mattes T.E."/>
            <person name="Alexander A.K."/>
            <person name="Richardson P.M."/>
            <person name="Munk A.C."/>
            <person name="Han C.S."/>
            <person name="Stothard P."/>
            <person name="Coleman N.V."/>
        </authorList>
    </citation>
    <scope>NUCLEOTIDE SEQUENCE [LARGE SCALE GENOMIC DNA]</scope>
    <source>
        <strain>JS666 / ATCC BAA-500</strain>
    </source>
</reference>
<feature type="chain" id="PRO_0000322695" description="UPF0758 protein Bpro_0948">
    <location>
        <begin position="1"/>
        <end position="224"/>
    </location>
</feature>
<feature type="domain" description="MPN" evidence="1">
    <location>
        <begin position="102"/>
        <end position="224"/>
    </location>
</feature>
<feature type="short sequence motif" description="JAMM motif" evidence="1">
    <location>
        <begin position="173"/>
        <end position="186"/>
    </location>
</feature>
<feature type="binding site" evidence="1">
    <location>
        <position position="173"/>
    </location>
    <ligand>
        <name>Zn(2+)</name>
        <dbReference type="ChEBI" id="CHEBI:29105"/>
        <note>catalytic</note>
    </ligand>
</feature>
<feature type="binding site" evidence="1">
    <location>
        <position position="175"/>
    </location>
    <ligand>
        <name>Zn(2+)</name>
        <dbReference type="ChEBI" id="CHEBI:29105"/>
        <note>catalytic</note>
    </ligand>
</feature>
<feature type="binding site" evidence="1">
    <location>
        <position position="186"/>
    </location>
    <ligand>
        <name>Zn(2+)</name>
        <dbReference type="ChEBI" id="CHEBI:29105"/>
        <note>catalytic</note>
    </ligand>
</feature>
<keyword id="KW-0378">Hydrolase</keyword>
<keyword id="KW-0479">Metal-binding</keyword>
<keyword id="KW-0482">Metalloprotease</keyword>
<keyword id="KW-0645">Protease</keyword>
<keyword id="KW-1185">Reference proteome</keyword>
<keyword id="KW-0862">Zinc</keyword>
<accession>Q12EY8</accession>